<keyword id="KW-0687">Ribonucleoprotein</keyword>
<keyword id="KW-0689">Ribosomal protein</keyword>
<accession>A0K7V7</accession>
<organism>
    <name type="scientific">Burkholderia cenocepacia (strain HI2424)</name>
    <dbReference type="NCBI Taxonomy" id="331272"/>
    <lineage>
        <taxon>Bacteria</taxon>
        <taxon>Pseudomonadati</taxon>
        <taxon>Pseudomonadota</taxon>
        <taxon>Betaproteobacteria</taxon>
        <taxon>Burkholderiales</taxon>
        <taxon>Burkholderiaceae</taxon>
        <taxon>Burkholderia</taxon>
        <taxon>Burkholderia cepacia complex</taxon>
    </lineage>
</organism>
<name>RL31B_BURCH</name>
<reference key="1">
    <citation type="submission" date="2006-08" db="EMBL/GenBank/DDBJ databases">
        <title>Complete sequence of chromosome 1 of Burkholderia cenocepacia HI2424.</title>
        <authorList>
            <person name="Copeland A."/>
            <person name="Lucas S."/>
            <person name="Lapidus A."/>
            <person name="Barry K."/>
            <person name="Detter J.C."/>
            <person name="Glavina del Rio T."/>
            <person name="Hammon N."/>
            <person name="Israni S."/>
            <person name="Pitluck S."/>
            <person name="Chain P."/>
            <person name="Malfatti S."/>
            <person name="Shin M."/>
            <person name="Vergez L."/>
            <person name="Schmutz J."/>
            <person name="Larimer F."/>
            <person name="Land M."/>
            <person name="Hauser L."/>
            <person name="Kyrpides N."/>
            <person name="Kim E."/>
            <person name="LiPuma J.J."/>
            <person name="Gonzalez C.F."/>
            <person name="Konstantinidis K."/>
            <person name="Tiedje J.M."/>
            <person name="Richardson P."/>
        </authorList>
    </citation>
    <scope>NUCLEOTIDE SEQUENCE [LARGE SCALE GENOMIC DNA]</scope>
    <source>
        <strain>HI2424</strain>
    </source>
</reference>
<comment type="subunit">
    <text evidence="1">Part of the 50S ribosomal subunit.</text>
</comment>
<comment type="similarity">
    <text evidence="1">Belongs to the bacterial ribosomal protein bL31 family. Type B subfamily.</text>
</comment>
<sequence length="88" mass="9969">MKPGIHPDYREVVFQDMSNGFKFITRSTIQTRETIEHEGKTYPLAKIEVSSESHSFYTGQQKIMDTAGRVEKFKNKFGARANGKAAAK</sequence>
<gene>
    <name evidence="1" type="primary">rpmE2</name>
    <name type="ordered locus">Bcen2424_1833</name>
</gene>
<dbReference type="EMBL" id="CP000458">
    <property type="protein sequence ID" value="ABK08584.1"/>
    <property type="molecule type" value="Genomic_DNA"/>
</dbReference>
<dbReference type="RefSeq" id="WP_011549676.1">
    <property type="nucleotide sequence ID" value="NC_008542.1"/>
</dbReference>
<dbReference type="SMR" id="A0K7V7"/>
<dbReference type="KEGG" id="bch:Bcen2424_1833"/>
<dbReference type="HOGENOM" id="CLU_114306_2_1_4"/>
<dbReference type="GO" id="GO:1990904">
    <property type="term" value="C:ribonucleoprotein complex"/>
    <property type="evidence" value="ECO:0007669"/>
    <property type="project" value="UniProtKB-KW"/>
</dbReference>
<dbReference type="GO" id="GO:0005840">
    <property type="term" value="C:ribosome"/>
    <property type="evidence" value="ECO:0007669"/>
    <property type="project" value="UniProtKB-KW"/>
</dbReference>
<dbReference type="GO" id="GO:0003735">
    <property type="term" value="F:structural constituent of ribosome"/>
    <property type="evidence" value="ECO:0007669"/>
    <property type="project" value="InterPro"/>
</dbReference>
<dbReference type="GO" id="GO:0006412">
    <property type="term" value="P:translation"/>
    <property type="evidence" value="ECO:0007669"/>
    <property type="project" value="UniProtKB-UniRule"/>
</dbReference>
<dbReference type="Gene3D" id="4.10.830.30">
    <property type="entry name" value="Ribosomal protein L31"/>
    <property type="match status" value="1"/>
</dbReference>
<dbReference type="HAMAP" id="MF_00502">
    <property type="entry name" value="Ribosomal_bL31_2"/>
    <property type="match status" value="1"/>
</dbReference>
<dbReference type="InterPro" id="IPR034704">
    <property type="entry name" value="Ribosomal_bL28/bL31-like_sf"/>
</dbReference>
<dbReference type="InterPro" id="IPR002150">
    <property type="entry name" value="Ribosomal_bL31"/>
</dbReference>
<dbReference type="InterPro" id="IPR027493">
    <property type="entry name" value="Ribosomal_bL31_B"/>
</dbReference>
<dbReference type="InterPro" id="IPR042105">
    <property type="entry name" value="Ribosomal_bL31_sf"/>
</dbReference>
<dbReference type="NCBIfam" id="TIGR00105">
    <property type="entry name" value="L31"/>
    <property type="match status" value="1"/>
</dbReference>
<dbReference type="NCBIfam" id="NF002462">
    <property type="entry name" value="PRK01678.1"/>
    <property type="match status" value="1"/>
</dbReference>
<dbReference type="PANTHER" id="PTHR33280">
    <property type="entry name" value="50S RIBOSOMAL PROTEIN L31, CHLOROPLASTIC"/>
    <property type="match status" value="1"/>
</dbReference>
<dbReference type="PANTHER" id="PTHR33280:SF1">
    <property type="entry name" value="LARGE RIBOSOMAL SUBUNIT PROTEIN BL31C"/>
    <property type="match status" value="1"/>
</dbReference>
<dbReference type="Pfam" id="PF01197">
    <property type="entry name" value="Ribosomal_L31"/>
    <property type="match status" value="1"/>
</dbReference>
<dbReference type="PRINTS" id="PR01249">
    <property type="entry name" value="RIBOSOMALL31"/>
</dbReference>
<dbReference type="SUPFAM" id="SSF143800">
    <property type="entry name" value="L28p-like"/>
    <property type="match status" value="1"/>
</dbReference>
<feature type="chain" id="PRO_1000014686" description="Large ribosomal subunit protein bL31B">
    <location>
        <begin position="1"/>
        <end position="88"/>
    </location>
</feature>
<proteinExistence type="inferred from homology"/>
<evidence type="ECO:0000255" key="1">
    <source>
        <dbReference type="HAMAP-Rule" id="MF_00502"/>
    </source>
</evidence>
<evidence type="ECO:0000305" key="2"/>
<protein>
    <recommendedName>
        <fullName evidence="1">Large ribosomal subunit protein bL31B</fullName>
    </recommendedName>
    <alternativeName>
        <fullName evidence="2">50S ribosomal protein L31 type B</fullName>
    </alternativeName>
</protein>